<name>N8DT2_SOPFL</name>
<dbReference type="EC" id="2.5.1.70"/>
<dbReference type="EMBL" id="AB370330">
    <property type="protein sequence ID" value="BAG12673.1"/>
    <property type="molecule type" value="mRNA"/>
</dbReference>
<dbReference type="SMR" id="B1B5P4"/>
<dbReference type="BioCyc" id="MetaCyc:MONOMER-16838"/>
<dbReference type="BRENDA" id="2.5.1.70">
    <property type="organism ID" value="8929"/>
</dbReference>
<dbReference type="GO" id="GO:0009507">
    <property type="term" value="C:chloroplast"/>
    <property type="evidence" value="ECO:0000314"/>
    <property type="project" value="UniProtKB"/>
</dbReference>
<dbReference type="GO" id="GO:0031969">
    <property type="term" value="C:chloroplast membrane"/>
    <property type="evidence" value="ECO:0007669"/>
    <property type="project" value="UniProtKB-SubCell"/>
</dbReference>
<dbReference type="GO" id="GO:0004659">
    <property type="term" value="F:prenyltransferase activity"/>
    <property type="evidence" value="ECO:0000314"/>
    <property type="project" value="UniProtKB"/>
</dbReference>
<dbReference type="CDD" id="cd13960">
    <property type="entry name" value="PT_UbiA_HPT1"/>
    <property type="match status" value="1"/>
</dbReference>
<dbReference type="FunFam" id="1.10.357.140:FF:000039">
    <property type="entry name" value="Naringenin 8-dimethylallyltransferase 2, chloroplastic"/>
    <property type="match status" value="1"/>
</dbReference>
<dbReference type="Gene3D" id="1.10.357.140">
    <property type="entry name" value="UbiA prenyltransferase"/>
    <property type="match status" value="1"/>
</dbReference>
<dbReference type="Gene3D" id="1.20.120.1780">
    <property type="entry name" value="UbiA prenyltransferase"/>
    <property type="match status" value="1"/>
</dbReference>
<dbReference type="InterPro" id="IPR044502">
    <property type="entry name" value="AtHST-like"/>
</dbReference>
<dbReference type="InterPro" id="IPR000537">
    <property type="entry name" value="UbiA_prenyltransferase"/>
</dbReference>
<dbReference type="InterPro" id="IPR044878">
    <property type="entry name" value="UbiA_sf"/>
</dbReference>
<dbReference type="NCBIfam" id="NF009525">
    <property type="entry name" value="PRK12887.1"/>
    <property type="match status" value="1"/>
</dbReference>
<dbReference type="PANTHER" id="PTHR43009:SF6">
    <property type="entry name" value="HOMOGENTISATE PHYTYLTRANSFERASE 1, CHLOROPLASTIC"/>
    <property type="match status" value="1"/>
</dbReference>
<dbReference type="PANTHER" id="PTHR43009">
    <property type="entry name" value="HOMOGENTISATE SOLANESYLTRANSFERASE, CHLOROPLASTIC"/>
    <property type="match status" value="1"/>
</dbReference>
<dbReference type="Pfam" id="PF01040">
    <property type="entry name" value="UbiA"/>
    <property type="match status" value="1"/>
</dbReference>
<organism>
    <name type="scientific">Sophora flavescens</name>
    <name type="common">Shrubby sophora</name>
    <name type="synonym">Radiusia flavescens</name>
    <dbReference type="NCBI Taxonomy" id="49840"/>
    <lineage>
        <taxon>Eukaryota</taxon>
        <taxon>Viridiplantae</taxon>
        <taxon>Streptophyta</taxon>
        <taxon>Embryophyta</taxon>
        <taxon>Tracheophyta</taxon>
        <taxon>Spermatophyta</taxon>
        <taxon>Magnoliopsida</taxon>
        <taxon>eudicotyledons</taxon>
        <taxon>Gunneridae</taxon>
        <taxon>Pentapetalae</taxon>
        <taxon>rosids</taxon>
        <taxon>fabids</taxon>
        <taxon>Fabales</taxon>
        <taxon>Fabaceae</taxon>
        <taxon>Papilionoideae</taxon>
        <taxon>50 kb inversion clade</taxon>
        <taxon>genistoids sensu lato</taxon>
        <taxon>core genistoids</taxon>
        <taxon>Sophoreae</taxon>
        <taxon>Sophora</taxon>
    </lineage>
</organism>
<keyword id="KW-0150">Chloroplast</keyword>
<keyword id="KW-0472">Membrane</keyword>
<keyword id="KW-0934">Plastid</keyword>
<keyword id="KW-0808">Transferase</keyword>
<keyword id="KW-0809">Transit peptide</keyword>
<keyword id="KW-0812">Transmembrane</keyword>
<keyword id="KW-1133">Transmembrane helix</keyword>
<comment type="function">
    <text evidence="2">Involved in the biosynthesis of sophoraflavanone G (SFG). Can use flavanones (naringenin, liquiritigenin and hesperetin) as substrates, but not flavonols or isoflavones. Shows a strict specificity for dimethylallyl diphosphate.</text>
</comment>
<comment type="catalytic activity">
    <reaction evidence="2">
        <text>(2S)-naringenin + dimethylallyl diphosphate = sophoraflavanone B + diphosphate</text>
        <dbReference type="Rhea" id="RHEA:15433"/>
        <dbReference type="ChEBI" id="CHEBI:17846"/>
        <dbReference type="ChEBI" id="CHEBI:33019"/>
        <dbReference type="ChEBI" id="CHEBI:50207"/>
        <dbReference type="ChEBI" id="CHEBI:57623"/>
        <dbReference type="EC" id="2.5.1.70"/>
    </reaction>
</comment>
<comment type="cofactor">
    <cofactor evidence="2">
        <name>Mg(2+)</name>
        <dbReference type="ChEBI" id="CHEBI:18420"/>
    </cofactor>
    <cofactor evidence="2">
        <name>Mn(2+)</name>
        <dbReference type="ChEBI" id="CHEBI:29035"/>
    </cofactor>
</comment>
<comment type="subcellular location">
    <subcellularLocation>
        <location evidence="3">Plastid</location>
        <location evidence="3">Chloroplast membrane</location>
        <topology evidence="3">Multi-pass membrane protein</topology>
    </subcellularLocation>
</comment>
<comment type="similarity">
    <text evidence="3">Belongs to the UbiA prenyltransferase family.</text>
</comment>
<accession>B1B5P4</accession>
<gene>
    <name type="primary">N8DT-2</name>
</gene>
<proteinExistence type="evidence at protein level"/>
<evidence type="ECO:0000255" key="1"/>
<evidence type="ECO:0000269" key="2">
    <source>
    </source>
</evidence>
<evidence type="ECO:0000305" key="3"/>
<feature type="transit peptide" description="Chloroplast" evidence="1">
    <location>
        <begin position="1"/>
        <end position="23"/>
    </location>
</feature>
<feature type="chain" id="PRO_0000418450" description="Naringenin 8-dimethylallyltransferase 2, chloroplastic">
    <location>
        <begin position="24"/>
        <end position="407"/>
    </location>
</feature>
<feature type="transmembrane region" description="Helical" evidence="1">
    <location>
        <begin position="117"/>
        <end position="137"/>
    </location>
</feature>
<feature type="transmembrane region" description="Helical" evidence="1">
    <location>
        <begin position="145"/>
        <end position="165"/>
    </location>
</feature>
<feature type="transmembrane region" description="Helical" evidence="1">
    <location>
        <begin position="206"/>
        <end position="226"/>
    </location>
</feature>
<feature type="transmembrane region" description="Helical" evidence="1">
    <location>
        <begin position="248"/>
        <end position="268"/>
    </location>
</feature>
<feature type="transmembrane region" description="Helical" evidence="1">
    <location>
        <begin position="285"/>
        <end position="305"/>
    </location>
</feature>
<feature type="transmembrane region" description="Helical" evidence="1">
    <location>
        <begin position="328"/>
        <end position="348"/>
    </location>
</feature>
<feature type="transmembrane region" description="Helical" evidence="1">
    <location>
        <begin position="352"/>
        <end position="372"/>
    </location>
</feature>
<feature type="transmembrane region" description="Helical" evidence="1">
    <location>
        <begin position="383"/>
        <end position="403"/>
    </location>
</feature>
<protein>
    <recommendedName>
        <fullName>Naringenin 8-dimethylallyltransferase 2, chloroplastic</fullName>
        <shortName>SfN8DT-2</shortName>
        <ecNumber>2.5.1.70</ecNumber>
    </recommendedName>
</protein>
<reference key="1">
    <citation type="journal article" date="2008" name="Plant Physiol.">
        <title>Cloning and Characterization of Naringenin 8-Prenyltransferase, a Flavonoid-Specific Prenyltransferase of Sophora flavescens.</title>
        <authorList>
            <person name="Sasaki K."/>
            <person name="Mito K."/>
            <person name="Ohara K."/>
            <person name="Yamamoto H."/>
            <person name="Yazaki K."/>
        </authorList>
    </citation>
    <scope>NUCLEOTIDE SEQUENCE [MRNA]</scope>
    <scope>FUNCTION</scope>
    <scope>CATALYTIC ACTIVITY</scope>
    <scope>SUBSTRATE SPECIFICITY</scope>
    <scope>COFACTOR</scope>
</reference>
<sequence length="407" mass="45747">MGFVLPASFPGASSITTGGSCLRSKQYAKNYYASSYVTTLWHKKGKIQKEYCAVIFSRHNLKQHYKVNEGGSTSKECEKKYVVNAISEQSFEYEPQARDPKNIWGSVNDALDTFYKFCRPYAIFSVVLGATFKSLVAVERLSDLSLAFFIGWLQVVVAVICIHIFDVGLNQLCDIEIDKINKPDLPLASGNLSFRNVVIITASSLILGLGFAWIVGSWPLFWTVFICCMFAAAYNVDLPLLRWKKYPVLTAISFIANVAVTRSLGFFLHMQTCVFKRPTTFPRPLIFCTAIVSIYAIVIALFKDIPDMEGDEKFGIQSLSLRLGPKRVFWICVSLLEMAYGVTILVGATSPILWSKIITVLGHAILASVLWYHAKSTDLTSNVVLQSFYMFIWKLHTAEYCLIPLFR</sequence>